<accession>Q7FNS8</accession>
<comment type="function">
    <text evidence="1">May help in the organization of the PsaL subunit.</text>
</comment>
<comment type="subcellular location">
    <subcellularLocation>
        <location evidence="1">Plastid</location>
        <location evidence="1">Chloroplast thylakoid membrane</location>
        <topology evidence="1">Single-pass membrane protein</topology>
    </subcellularLocation>
</comment>
<comment type="similarity">
    <text evidence="1">Belongs to the PsaI family.</text>
</comment>
<proteinExistence type="inferred from homology"/>
<keyword id="KW-0150">Chloroplast</keyword>
<keyword id="KW-0472">Membrane</keyword>
<keyword id="KW-0602">Photosynthesis</keyword>
<keyword id="KW-0603">Photosystem I</keyword>
<keyword id="KW-0934">Plastid</keyword>
<keyword id="KW-0793">Thylakoid</keyword>
<keyword id="KW-0812">Transmembrane</keyword>
<keyword id="KW-1133">Transmembrane helix</keyword>
<geneLocation type="chloroplast"/>
<evidence type="ECO:0000255" key="1">
    <source>
        <dbReference type="HAMAP-Rule" id="MF_00431"/>
    </source>
</evidence>
<gene>
    <name evidence="1" type="primary">psaI</name>
</gene>
<dbReference type="EMBL" id="AJ316582">
    <property type="protein sequence ID" value="CAC88054.1"/>
    <property type="molecule type" value="Genomic_DNA"/>
</dbReference>
<dbReference type="RefSeq" id="NP_783242.1">
    <property type="nucleotide sequence ID" value="NC_004561.1"/>
</dbReference>
<dbReference type="SMR" id="Q7FNS8"/>
<dbReference type="GeneID" id="806498"/>
<dbReference type="GO" id="GO:0009535">
    <property type="term" value="C:chloroplast thylakoid membrane"/>
    <property type="evidence" value="ECO:0007669"/>
    <property type="project" value="UniProtKB-SubCell"/>
</dbReference>
<dbReference type="GO" id="GO:0009522">
    <property type="term" value="C:photosystem I"/>
    <property type="evidence" value="ECO:0007669"/>
    <property type="project" value="UniProtKB-KW"/>
</dbReference>
<dbReference type="GO" id="GO:0015979">
    <property type="term" value="P:photosynthesis"/>
    <property type="evidence" value="ECO:0007669"/>
    <property type="project" value="UniProtKB-UniRule"/>
</dbReference>
<dbReference type="HAMAP" id="MF_00431">
    <property type="entry name" value="PSI_PsaI"/>
    <property type="match status" value="1"/>
</dbReference>
<dbReference type="InterPro" id="IPR001302">
    <property type="entry name" value="PSI_PsaI"/>
</dbReference>
<dbReference type="InterPro" id="IPR036357">
    <property type="entry name" value="PSI_PsaI_sf"/>
</dbReference>
<dbReference type="NCBIfam" id="TIGR03052">
    <property type="entry name" value="PS_I_psaI"/>
    <property type="match status" value="1"/>
</dbReference>
<dbReference type="PANTHER" id="PTHR35775">
    <property type="match status" value="1"/>
</dbReference>
<dbReference type="PANTHER" id="PTHR35775:SF2">
    <property type="entry name" value="PHOTOSYSTEM I REACTION CENTER SUBUNIT VIII"/>
    <property type="match status" value="1"/>
</dbReference>
<dbReference type="Pfam" id="PF00796">
    <property type="entry name" value="PSI_8"/>
    <property type="match status" value="1"/>
</dbReference>
<dbReference type="SUPFAM" id="SSF81540">
    <property type="entry name" value="Subunit VIII of photosystem I reaction centre, PsaI"/>
    <property type="match status" value="1"/>
</dbReference>
<feature type="chain" id="PRO_0000194644" description="Photosystem I reaction center subunit VIII">
    <location>
        <begin position="1"/>
        <end position="36"/>
    </location>
</feature>
<feature type="transmembrane region" description="Helical" evidence="1">
    <location>
        <begin position="6"/>
        <end position="28"/>
    </location>
</feature>
<protein>
    <recommendedName>
        <fullName evidence="1">Photosystem I reaction center subunit VIII</fullName>
        <shortName evidence="1">PSI-I</shortName>
    </recommendedName>
</protein>
<reference key="1">
    <citation type="journal article" date="2002" name="Mol. Biol. Evol.">
        <title>The plastid chromosome of Atropa belladonna and its comparison with that of Nicotiana tabacum: the role of RNA editing in generating divergence in the process of plant speciation.</title>
        <authorList>
            <person name="Schmitz-Linneweber C."/>
            <person name="Regel R."/>
            <person name="Du T.G."/>
            <person name="Hupfer H."/>
            <person name="Herrmann R.G."/>
            <person name="Maier R.M."/>
        </authorList>
    </citation>
    <scope>NUCLEOTIDE SEQUENCE [LARGE SCALE GENOMIC DNA]</scope>
    <source>
        <strain>cv. Ab5p(kan)</strain>
    </source>
</reference>
<sequence>MTNLNLPSIFVPLVGLVFPAIAMASLFLHVQKNKIV</sequence>
<organism>
    <name type="scientific">Atropa belladonna</name>
    <name type="common">Belladonna</name>
    <name type="synonym">Deadly nightshade</name>
    <dbReference type="NCBI Taxonomy" id="33113"/>
    <lineage>
        <taxon>Eukaryota</taxon>
        <taxon>Viridiplantae</taxon>
        <taxon>Streptophyta</taxon>
        <taxon>Embryophyta</taxon>
        <taxon>Tracheophyta</taxon>
        <taxon>Spermatophyta</taxon>
        <taxon>Magnoliopsida</taxon>
        <taxon>eudicotyledons</taxon>
        <taxon>Gunneridae</taxon>
        <taxon>Pentapetalae</taxon>
        <taxon>asterids</taxon>
        <taxon>lamiids</taxon>
        <taxon>Solanales</taxon>
        <taxon>Solanaceae</taxon>
        <taxon>Solanoideae</taxon>
        <taxon>Hyoscyameae</taxon>
        <taxon>Atropa</taxon>
    </lineage>
</organism>
<name>PSAI_ATRBE</name>